<protein>
    <recommendedName>
        <fullName evidence="1">Ribosomal RNA small subunit methyltransferase B</fullName>
        <ecNumber evidence="1">2.1.1.176</ecNumber>
    </recommendedName>
    <alternativeName>
        <fullName evidence="1">16S rRNA m5C967 methyltransferase</fullName>
    </alternativeName>
    <alternativeName>
        <fullName evidence="1">rRNA (cytosine-C(5)-)-methyltransferase RsmB</fullName>
    </alternativeName>
</protein>
<name>RSMB_SALNS</name>
<accession>B4SUR0</accession>
<organism>
    <name type="scientific">Salmonella newport (strain SL254)</name>
    <dbReference type="NCBI Taxonomy" id="423368"/>
    <lineage>
        <taxon>Bacteria</taxon>
        <taxon>Pseudomonadati</taxon>
        <taxon>Pseudomonadota</taxon>
        <taxon>Gammaproteobacteria</taxon>
        <taxon>Enterobacterales</taxon>
        <taxon>Enterobacteriaceae</taxon>
        <taxon>Salmonella</taxon>
    </lineage>
</organism>
<feature type="chain" id="PRO_0000366170" description="Ribosomal RNA small subunit methyltransferase B">
    <location>
        <begin position="1"/>
        <end position="429"/>
    </location>
</feature>
<feature type="region of interest" description="Disordered" evidence="2">
    <location>
        <begin position="397"/>
        <end position="419"/>
    </location>
</feature>
<feature type="compositionally biased region" description="Polar residues" evidence="2">
    <location>
        <begin position="400"/>
        <end position="412"/>
    </location>
</feature>
<feature type="active site" description="Nucleophile" evidence="1">
    <location>
        <position position="375"/>
    </location>
</feature>
<feature type="binding site" evidence="1">
    <location>
        <begin position="254"/>
        <end position="260"/>
    </location>
    <ligand>
        <name>S-adenosyl-L-methionine</name>
        <dbReference type="ChEBI" id="CHEBI:59789"/>
    </ligand>
</feature>
<feature type="binding site" evidence="1">
    <location>
        <position position="277"/>
    </location>
    <ligand>
        <name>S-adenosyl-L-methionine</name>
        <dbReference type="ChEBI" id="CHEBI:59789"/>
    </ligand>
</feature>
<feature type="binding site" evidence="1">
    <location>
        <position position="303"/>
    </location>
    <ligand>
        <name>S-adenosyl-L-methionine</name>
        <dbReference type="ChEBI" id="CHEBI:59789"/>
    </ligand>
</feature>
<feature type="binding site" evidence="1">
    <location>
        <position position="322"/>
    </location>
    <ligand>
        <name>S-adenosyl-L-methionine</name>
        <dbReference type="ChEBI" id="CHEBI:59789"/>
    </ligand>
</feature>
<proteinExistence type="inferred from homology"/>
<sequence>MKKQNNLRSLAAQAVEQVVEQGQSLSNVLPPLQQKVADKDKALLQELCFGVLRTLSQLEWLINKLMSRPMTGKQRTVHYLIMVGFYQLLYTRVPPHAALAETVEGAVAIKRPQLKGLINGVLRQFQRQQETLLNEFATSDARFLHPGWLVKRLQNAYPTQWQHIIEANNQRPPMWLRVNRTHHTRDGWLGLLEDAGMKGYPHPDYPDAVRLETPAPVHALPGFAEGWVTVQDASAQGCAVFLAPQNGEHILDLCAAPGGKTTHILEVAPEADVLAVDIDEQRLSRVYDNLKRLGMKATVKQGDGRYPSQWCGEQQFDRILLDAPCSATGVIRRHPDIKWLRRDRDIAELAQLQAEILDAVWPRLKPGGTLVYATCSVLPEENRDQIKAFLQRTPDAALSETGTPDQPGQQNLPGGEEGDGFFYAKLIKK</sequence>
<evidence type="ECO:0000255" key="1">
    <source>
        <dbReference type="HAMAP-Rule" id="MF_01856"/>
    </source>
</evidence>
<evidence type="ECO:0000256" key="2">
    <source>
        <dbReference type="SAM" id="MobiDB-lite"/>
    </source>
</evidence>
<dbReference type="EC" id="2.1.1.176" evidence="1"/>
<dbReference type="EMBL" id="CP001113">
    <property type="protein sequence ID" value="ACF62299.1"/>
    <property type="molecule type" value="Genomic_DNA"/>
</dbReference>
<dbReference type="RefSeq" id="WP_000744596.1">
    <property type="nucleotide sequence ID" value="NZ_CCMR01000003.1"/>
</dbReference>
<dbReference type="SMR" id="B4SUR0"/>
<dbReference type="KEGG" id="see:SNSL254_A3677"/>
<dbReference type="HOGENOM" id="CLU_005316_0_4_6"/>
<dbReference type="Proteomes" id="UP000008824">
    <property type="component" value="Chromosome"/>
</dbReference>
<dbReference type="GO" id="GO:0005829">
    <property type="term" value="C:cytosol"/>
    <property type="evidence" value="ECO:0007669"/>
    <property type="project" value="TreeGrafter"/>
</dbReference>
<dbReference type="GO" id="GO:0003723">
    <property type="term" value="F:RNA binding"/>
    <property type="evidence" value="ECO:0007669"/>
    <property type="project" value="UniProtKB-KW"/>
</dbReference>
<dbReference type="GO" id="GO:0009383">
    <property type="term" value="F:rRNA (cytosine-C5-)-methyltransferase activity"/>
    <property type="evidence" value="ECO:0007669"/>
    <property type="project" value="TreeGrafter"/>
</dbReference>
<dbReference type="GO" id="GO:0006355">
    <property type="term" value="P:regulation of DNA-templated transcription"/>
    <property type="evidence" value="ECO:0007669"/>
    <property type="project" value="InterPro"/>
</dbReference>
<dbReference type="GO" id="GO:0070475">
    <property type="term" value="P:rRNA base methylation"/>
    <property type="evidence" value="ECO:0007669"/>
    <property type="project" value="TreeGrafter"/>
</dbReference>
<dbReference type="CDD" id="cd02440">
    <property type="entry name" value="AdoMet_MTases"/>
    <property type="match status" value="1"/>
</dbReference>
<dbReference type="CDD" id="cd00620">
    <property type="entry name" value="Methyltransferase_Sun"/>
    <property type="match status" value="1"/>
</dbReference>
<dbReference type="FunFam" id="1.10.287.730:FF:000001">
    <property type="entry name" value="Ribosomal RNA small subunit methyltransferase B"/>
    <property type="match status" value="1"/>
</dbReference>
<dbReference type="FunFam" id="1.10.940.10:FF:000002">
    <property type="entry name" value="Ribosomal RNA small subunit methyltransferase B"/>
    <property type="match status" value="1"/>
</dbReference>
<dbReference type="FunFam" id="3.30.70.1170:FF:000002">
    <property type="entry name" value="Ribosomal RNA small subunit methyltransferase B"/>
    <property type="match status" value="1"/>
</dbReference>
<dbReference type="FunFam" id="3.40.50.150:FF:000022">
    <property type="entry name" value="Ribosomal RNA small subunit methyltransferase B"/>
    <property type="match status" value="1"/>
</dbReference>
<dbReference type="Gene3D" id="1.10.287.730">
    <property type="entry name" value="Helix hairpin bin"/>
    <property type="match status" value="1"/>
</dbReference>
<dbReference type="Gene3D" id="1.10.940.10">
    <property type="entry name" value="NusB-like"/>
    <property type="match status" value="1"/>
</dbReference>
<dbReference type="Gene3D" id="3.30.70.1170">
    <property type="entry name" value="Sun protein, domain 3"/>
    <property type="match status" value="1"/>
</dbReference>
<dbReference type="Gene3D" id="3.40.50.150">
    <property type="entry name" value="Vaccinia Virus protein VP39"/>
    <property type="match status" value="1"/>
</dbReference>
<dbReference type="HAMAP" id="MF_01856">
    <property type="entry name" value="16SrRNA_methyltr_B"/>
    <property type="match status" value="1"/>
</dbReference>
<dbReference type="InterPro" id="IPR049560">
    <property type="entry name" value="MeTrfase_RsmB-F_NOP2_cat"/>
</dbReference>
<dbReference type="InterPro" id="IPR001678">
    <property type="entry name" value="MeTrfase_RsmB-F_NOP2_dom"/>
</dbReference>
<dbReference type="InterPro" id="IPR035926">
    <property type="entry name" value="NusB-like_sf"/>
</dbReference>
<dbReference type="InterPro" id="IPR006027">
    <property type="entry name" value="NusB_RsmB_TIM44"/>
</dbReference>
<dbReference type="InterPro" id="IPR023267">
    <property type="entry name" value="RCMT"/>
</dbReference>
<dbReference type="InterPro" id="IPR004573">
    <property type="entry name" value="rRNA_ssu_MeTfrase_B"/>
</dbReference>
<dbReference type="InterPro" id="IPR023541">
    <property type="entry name" value="rRNA_ssu_MeTfrase_B_ent"/>
</dbReference>
<dbReference type="InterPro" id="IPR054728">
    <property type="entry name" value="RsmB-like_ferredoxin"/>
</dbReference>
<dbReference type="InterPro" id="IPR048019">
    <property type="entry name" value="RsmB-like_N"/>
</dbReference>
<dbReference type="InterPro" id="IPR018314">
    <property type="entry name" value="RsmB/NOL1/NOP2-like_CS"/>
</dbReference>
<dbReference type="InterPro" id="IPR029063">
    <property type="entry name" value="SAM-dependent_MTases_sf"/>
</dbReference>
<dbReference type="NCBIfam" id="NF008149">
    <property type="entry name" value="PRK10901.1"/>
    <property type="match status" value="1"/>
</dbReference>
<dbReference type="NCBIfam" id="NF011494">
    <property type="entry name" value="PRK14902.1"/>
    <property type="match status" value="1"/>
</dbReference>
<dbReference type="NCBIfam" id="TIGR00563">
    <property type="entry name" value="rsmB"/>
    <property type="match status" value="1"/>
</dbReference>
<dbReference type="PANTHER" id="PTHR22807:SF61">
    <property type="entry name" value="NOL1_NOP2_SUN FAMILY PROTEIN _ ANTITERMINATION NUSB DOMAIN-CONTAINING PROTEIN"/>
    <property type="match status" value="1"/>
</dbReference>
<dbReference type="PANTHER" id="PTHR22807">
    <property type="entry name" value="NOP2 YEAST -RELATED NOL1/NOP2/FMU SUN DOMAIN-CONTAINING"/>
    <property type="match status" value="1"/>
</dbReference>
<dbReference type="Pfam" id="PF01189">
    <property type="entry name" value="Methyltr_RsmB-F"/>
    <property type="match status" value="1"/>
</dbReference>
<dbReference type="Pfam" id="PF01029">
    <property type="entry name" value="NusB"/>
    <property type="match status" value="1"/>
</dbReference>
<dbReference type="Pfam" id="PF22458">
    <property type="entry name" value="RsmF-B_ferredox"/>
    <property type="match status" value="1"/>
</dbReference>
<dbReference type="PRINTS" id="PR02008">
    <property type="entry name" value="RCMTFAMILY"/>
</dbReference>
<dbReference type="SUPFAM" id="SSF48013">
    <property type="entry name" value="NusB-like"/>
    <property type="match status" value="1"/>
</dbReference>
<dbReference type="SUPFAM" id="SSF53335">
    <property type="entry name" value="S-adenosyl-L-methionine-dependent methyltransferases"/>
    <property type="match status" value="1"/>
</dbReference>
<dbReference type="PROSITE" id="PS01153">
    <property type="entry name" value="NOL1_NOP2_SUN"/>
    <property type="match status" value="1"/>
</dbReference>
<dbReference type="PROSITE" id="PS51686">
    <property type="entry name" value="SAM_MT_RSMB_NOP"/>
    <property type="match status" value="1"/>
</dbReference>
<keyword id="KW-0963">Cytoplasm</keyword>
<keyword id="KW-0489">Methyltransferase</keyword>
<keyword id="KW-0694">RNA-binding</keyword>
<keyword id="KW-0698">rRNA processing</keyword>
<keyword id="KW-0949">S-adenosyl-L-methionine</keyword>
<keyword id="KW-0808">Transferase</keyword>
<comment type="function">
    <text evidence="1">Specifically methylates the cytosine at position 967 (m5C967) of 16S rRNA.</text>
</comment>
<comment type="catalytic activity">
    <reaction evidence="1">
        <text>cytidine(967) in 16S rRNA + S-adenosyl-L-methionine = 5-methylcytidine(967) in 16S rRNA + S-adenosyl-L-homocysteine + H(+)</text>
        <dbReference type="Rhea" id="RHEA:42748"/>
        <dbReference type="Rhea" id="RHEA-COMP:10219"/>
        <dbReference type="Rhea" id="RHEA-COMP:10220"/>
        <dbReference type="ChEBI" id="CHEBI:15378"/>
        <dbReference type="ChEBI" id="CHEBI:57856"/>
        <dbReference type="ChEBI" id="CHEBI:59789"/>
        <dbReference type="ChEBI" id="CHEBI:74483"/>
        <dbReference type="ChEBI" id="CHEBI:82748"/>
        <dbReference type="EC" id="2.1.1.176"/>
    </reaction>
</comment>
<comment type="subcellular location">
    <subcellularLocation>
        <location evidence="1">Cytoplasm</location>
    </subcellularLocation>
</comment>
<comment type="similarity">
    <text evidence="1">Belongs to the class I-like SAM-binding methyltransferase superfamily. RsmB/NOP family.</text>
</comment>
<reference key="1">
    <citation type="journal article" date="2011" name="J. Bacteriol.">
        <title>Comparative genomics of 28 Salmonella enterica isolates: evidence for CRISPR-mediated adaptive sublineage evolution.</title>
        <authorList>
            <person name="Fricke W.F."/>
            <person name="Mammel M.K."/>
            <person name="McDermott P.F."/>
            <person name="Tartera C."/>
            <person name="White D.G."/>
            <person name="Leclerc J.E."/>
            <person name="Ravel J."/>
            <person name="Cebula T.A."/>
        </authorList>
    </citation>
    <scope>NUCLEOTIDE SEQUENCE [LARGE SCALE GENOMIC DNA]</scope>
    <source>
        <strain>SL254</strain>
    </source>
</reference>
<gene>
    <name evidence="1" type="primary">rsmB</name>
    <name evidence="1" type="synonym">sun</name>
    <name type="ordered locus">SNSL254_A3677</name>
</gene>